<keyword id="KW-0217">Developmental protein</keyword>
<keyword id="KW-0325">Glycoprotein</keyword>
<keyword id="KW-1185">Reference proteome</keyword>
<keyword id="KW-0964">Secreted</keyword>
<keyword id="KW-0732">Signal</keyword>
<comment type="function">
    <text evidence="1 3 4">Involved in dorsal-ventral patterning, permitting peak BMP signaling by antagonizing the residual anti-BMP activity of the cleavage products of chrd. Functions to promote the formation of ventral mesoderm by increasing the activity of bmp7 and other BMPS. Seems to antagonize BMP signaling by forming ternary complexes with chrd and BMPs, thereby preventing BMPs from binding to their receptors. In addition to the anti-BMP function, also has pro-BMP activity, partly mediated by cleavage and degradation of chrd, which releases BMPs from ternary complexes. May be an important modulator of BMP-regulated cartilage development and chondrocyte differentiation (By similarity).</text>
</comment>
<comment type="subunit">
    <text evidence="1">Binds directly to bmp2, bmp4 and bmp7 and can form a ternary complex with bmps and chordin, thus preventing the binding of bmps to their cell surface receptors.</text>
</comment>
<comment type="subcellular location">
    <subcellularLocation>
        <location evidence="1">Secreted</location>
    </subcellularLocation>
</comment>
<comment type="tissue specificity">
    <text evidence="3">Posterior defects are induced by overexpression. This may arise through alteration of bmp4 or chrd function in the developing tailbud region.</text>
</comment>
<comment type="developmental stage">
    <text evidence="3">Maternal transcripts detected in eggs. Uniform expression across the entire animal hemisphere and marginal zone of the early gastrula. At tailbud stage, expressed in the developing tail, anterior brain, eye and heart.</text>
</comment>
<comment type="domain">
    <text>The N-terminal domain is sufficient to interact with bmp4.</text>
</comment>
<comment type="miscellaneous">
    <text>Knockdown of tsg and bmp7 results in the siren phenotype with loss of posteroventral cell fates associated with decreased BMP activity.</text>
</comment>
<comment type="similarity">
    <text evidence="5">Belongs to the twisted gastrulation protein family.</text>
</comment>
<organism>
    <name type="scientific">Xenopus laevis</name>
    <name type="common">African clawed frog</name>
    <dbReference type="NCBI Taxonomy" id="8355"/>
    <lineage>
        <taxon>Eukaryota</taxon>
        <taxon>Metazoa</taxon>
        <taxon>Chordata</taxon>
        <taxon>Craniata</taxon>
        <taxon>Vertebrata</taxon>
        <taxon>Euteleostomi</taxon>
        <taxon>Amphibia</taxon>
        <taxon>Batrachia</taxon>
        <taxon>Anura</taxon>
        <taxon>Pipoidea</taxon>
        <taxon>Pipidae</taxon>
        <taxon>Xenopodinae</taxon>
        <taxon>Xenopus</taxon>
        <taxon>Xenopus</taxon>
    </lineage>
</organism>
<gene>
    <name type="primary">twsg1-a</name>
    <name type="synonym">tsg</name>
</gene>
<sequence>MKPSFLHIPAAALLLCSLWILPIYCCNKALCASDVSKCLIQELCQCRPTDGNCSCCKECMLCLGTLWDECCDCVGMCKPRNYSDTPPTSKSTVEELHEPIPSLFRALTEGDTQLNWNIVTFPVVEELSHHENLVSFLENVNQPQNVSVQVSHSNEKEHMCTVVYFDDCMSIHQCKVSCESMGASKYRWFHNACCECVGPECIDYGSKTVKCVNCMV</sequence>
<accession>Q98T88</accession>
<dbReference type="EMBL" id="AF279246">
    <property type="protein sequence ID" value="AAK27327.1"/>
    <property type="molecule type" value="mRNA"/>
</dbReference>
<dbReference type="EMBL" id="BC068634">
    <property type="protein sequence ID" value="AAH68634.1"/>
    <property type="molecule type" value="mRNA"/>
</dbReference>
<dbReference type="RefSeq" id="NP_001084240.1">
    <property type="nucleotide sequence ID" value="NM_001090771.1"/>
</dbReference>
<dbReference type="RefSeq" id="XP_018124139.1">
    <property type="nucleotide sequence ID" value="XM_018268650.1"/>
</dbReference>
<dbReference type="RefSeq" id="XP_018124140.1">
    <property type="nucleotide sequence ID" value="XM_018268651.1"/>
</dbReference>
<dbReference type="SMR" id="Q98T88"/>
<dbReference type="GlyCosmos" id="Q98T88">
    <property type="glycosylation" value="3 sites, No reported glycans"/>
</dbReference>
<dbReference type="DNASU" id="399387"/>
<dbReference type="GeneID" id="399387"/>
<dbReference type="KEGG" id="xla:399387"/>
<dbReference type="AGR" id="Xenbase:XB-GENE-6254023"/>
<dbReference type="CTD" id="399387"/>
<dbReference type="Xenbase" id="XB-GENE-6254023">
    <property type="gene designation" value="twsg1.S"/>
</dbReference>
<dbReference type="OMA" id="WKTISYS"/>
<dbReference type="OrthoDB" id="10037323at2759"/>
<dbReference type="Proteomes" id="UP000186698">
    <property type="component" value="Chromosome 6S"/>
</dbReference>
<dbReference type="Bgee" id="399387">
    <property type="expression patterns" value="Expressed in brain and 19 other cell types or tissues"/>
</dbReference>
<dbReference type="GO" id="GO:0005615">
    <property type="term" value="C:extracellular space"/>
    <property type="evidence" value="ECO:0000318"/>
    <property type="project" value="GO_Central"/>
</dbReference>
<dbReference type="GO" id="GO:0030510">
    <property type="term" value="P:regulation of BMP signaling pathway"/>
    <property type="evidence" value="ECO:0000318"/>
    <property type="project" value="GO_Central"/>
</dbReference>
<dbReference type="InterPro" id="IPR006761">
    <property type="entry name" value="Tsg"/>
</dbReference>
<dbReference type="PANTHER" id="PTHR12312:SF17">
    <property type="entry name" value="TWISTED GASTRULATION PROTEIN HOMOLOG 1"/>
    <property type="match status" value="1"/>
</dbReference>
<dbReference type="PANTHER" id="PTHR12312">
    <property type="entry name" value="TWISTED GASTRULATION PROTEIN HOMOLOG 1-A-RELATED"/>
    <property type="match status" value="1"/>
</dbReference>
<dbReference type="Pfam" id="PF04668">
    <property type="entry name" value="Tsg"/>
    <property type="match status" value="1"/>
</dbReference>
<dbReference type="Pfam" id="PF23782">
    <property type="entry name" value="Tsg_N"/>
    <property type="match status" value="1"/>
</dbReference>
<protein>
    <recommendedName>
        <fullName>Twisted gastrulation protein homolog 1-A</fullName>
    </recommendedName>
</protein>
<name>TWS1A_XENLA</name>
<proteinExistence type="evidence at protein level"/>
<reference key="1">
    <citation type="journal article" date="2001" name="Nature">
        <title>Homologues of Twisted gastrulation are extracellular cofactors in antagonism of BMP signalling.</title>
        <authorList>
            <person name="Scott I.C."/>
            <person name="Blitz I.L."/>
            <person name="Pappano W.N."/>
            <person name="Maas S.A."/>
            <person name="Cho K.W.Y."/>
            <person name="Greenspan D.S."/>
        </authorList>
    </citation>
    <scope>NUCLEOTIDE SEQUENCE [MRNA]</scope>
    <scope>FUNCTION</scope>
    <scope>TISSUE SPECIFICITY</scope>
    <scope>DEVELOPMENTAL STAGE</scope>
</reference>
<reference key="2">
    <citation type="journal article" date="2001" name="Nature">
        <authorList>
            <person name="Scott I.C."/>
            <person name="Blitz I.L."/>
            <person name="Pappano W.N."/>
            <person name="Maas S.A."/>
            <person name="Cho K.W.Y."/>
            <person name="Greenspan D.S."/>
        </authorList>
    </citation>
    <scope>ERRATUM OF PUBMED:11260715</scope>
</reference>
<reference key="3">
    <citation type="submission" date="2003-08" db="EMBL/GenBank/DDBJ databases">
        <authorList>
            <consortium name="NIH - Xenopus Gene Collection (XGC) project"/>
        </authorList>
    </citation>
    <scope>NUCLEOTIDE SEQUENCE [LARGE SCALE MRNA]</scope>
</reference>
<reference key="4">
    <citation type="journal article" date="2005" name="Development">
        <title>Sirenomelia in Bmp7 and Tsg compound mutant mice: requirement for Bmp signaling in the development of ventral posterior mesoderm.</title>
        <authorList>
            <person name="Zakin L."/>
            <person name="Reversade B."/>
            <person name="Kuroda H."/>
            <person name="Lyons K.M."/>
            <person name="De Robertis E.M."/>
        </authorList>
    </citation>
    <scope>KNOCKDOWN</scope>
    <scope>FUNCTION</scope>
    <scope>INTERACTION WITH BMP7</scope>
</reference>
<feature type="signal peptide" evidence="2">
    <location>
        <begin position="1"/>
        <end position="25"/>
    </location>
</feature>
<feature type="chain" id="PRO_0000278813" description="Twisted gastrulation protein homolog 1-A">
    <location>
        <begin position="26"/>
        <end position="216"/>
    </location>
</feature>
<feature type="glycosylation site" description="N-linked (GlcNAc...) asparagine" evidence="2">
    <location>
        <position position="52"/>
    </location>
</feature>
<feature type="glycosylation site" description="N-linked (GlcNAc...) asparagine" evidence="2">
    <location>
        <position position="81"/>
    </location>
</feature>
<feature type="glycosylation site" description="N-linked (GlcNAc...) asparagine" evidence="2">
    <location>
        <position position="145"/>
    </location>
</feature>
<evidence type="ECO:0000250" key="1"/>
<evidence type="ECO:0000255" key="2"/>
<evidence type="ECO:0000269" key="3">
    <source>
    </source>
</evidence>
<evidence type="ECO:0000269" key="4">
    <source>
    </source>
</evidence>
<evidence type="ECO:0000305" key="5"/>